<keyword id="KW-0002">3D-structure</keyword>
<keyword id="KW-0068">Autocatalytic cleavage</keyword>
<keyword id="KW-0903">Direct protein sequencing</keyword>
<keyword id="KW-1015">Disulfide bond</keyword>
<keyword id="KW-0325">Glycoprotein</keyword>
<keyword id="KW-0378">Hydrolase</keyword>
<keyword id="KW-0645">Protease</keyword>
<keyword id="KW-0732">Signal</keyword>
<keyword id="KW-0788">Thiol protease</keyword>
<keyword id="KW-0865">Zymogen</keyword>
<protein>
    <recommendedName>
        <fullName>Cruzipain</fullName>
        <ecNumber>3.4.22.51</ecNumber>
    </recommendedName>
    <alternativeName>
        <fullName>Cruzaine</fullName>
    </alternativeName>
    <alternativeName>
        <fullName>Major cysteine proteinase</fullName>
    </alternativeName>
</protein>
<name>CYSP_TRYCR</name>
<proteinExistence type="evidence at protein level"/>
<reference key="1">
    <citation type="journal article" date="1992" name="J. Biol. Chem.">
        <title>The sequence, organization, and expression of the major cysteine protease (cruzain) from Trypanosoma cruzi.</title>
        <authorList>
            <person name="Eakin A.E."/>
            <person name="Mills A.A."/>
            <person name="Harth G."/>
            <person name="McKerrow J.H."/>
            <person name="Craik C.S."/>
        </authorList>
    </citation>
    <scope>NUCLEOTIDE SEQUENCE</scope>
    <source>
        <strain>Tulahuen</strain>
    </source>
</reference>
<reference key="2">
    <citation type="journal article" date="1992" name="Mol. Biochem. Parasitol.">
        <title>The major cysteine proteinase (cruzipain) from Trypanosoma cruzi is encoded by multiple polymorphic tandemly organized genes located on different chromosomes.</title>
        <authorList>
            <person name="Campetella O."/>
            <person name="Henriksson J."/>
            <person name="Aaslund L."/>
            <person name="Frasch A.C.C."/>
            <person name="Pettersson U."/>
            <person name="Cazzulo J.J."/>
        </authorList>
    </citation>
    <scope>NUCLEOTIDE SEQUENCE [GENOMIC DNA] (CLONES 1800-2 AND 1800-4)</scope>
    <source>
        <strain>Tulahuen 2</strain>
    </source>
</reference>
<reference key="3">
    <citation type="journal article" date="1990" name="Mol. Biochem. Parasitol.">
        <title>Amplification and sequencing of genomic DNA fragments encoding cysteine proteases from protozoan parasites.</title>
        <authorList>
            <person name="Eakin A.E."/>
            <person name="Bouvier J."/>
            <person name="Sakanari J.A."/>
            <person name="Craik C.S."/>
            <person name="McKerrow J.H."/>
        </authorList>
    </citation>
    <scope>NUCLEOTIDE SEQUENCE [GENOMIC DNA] OF 141-306</scope>
    <source>
        <strain>RA</strain>
    </source>
</reference>
<reference key="4">
    <citation type="journal article" date="1991" name="Mol. Biochem. Parasitol.">
        <title>The C-terminal extension of the major cysteine proteinase (cruzipain) from Trypanosoma cruzi.</title>
        <authorList>
            <person name="Aaslund L."/>
            <person name="Henriksson J."/>
            <person name="Campetella O."/>
            <person name="Frasch A.C.C."/>
            <person name="Pettersson U."/>
            <person name="Cazzulo J.J."/>
        </authorList>
    </citation>
    <scope>NUCLEOTIDE SEQUENCE [MRNA] OF 295-467</scope>
    <source>
        <strain>Tulahuen 2</strain>
    </source>
</reference>
<reference key="5">
    <citation type="journal article" date="1991" name="Mol. Biochem. Parasitol.">
        <title>Self-proteolysis of the cysteine proteinase, cruzipain, from Trypanosoma cruzi gives a major fragment corresponding to its carboxy-terminal domain.</title>
        <authorList>
            <person name="Hellman U."/>
            <person name="Wernstedt C."/>
            <person name="Cazzulo J.J."/>
        </authorList>
    </citation>
    <scope>AUTOCATALYSIS OF C-TERMINAL</scope>
    <source>
        <strain>Tulahuen 2</strain>
    </source>
</reference>
<reference key="6">
    <citation type="journal article" date="1990" name="Biochim. Biophys. Acta">
        <title>Some kinetic properties of a cysteine proteinase (cruzipain) from Trypanosoma cruzi.</title>
        <authorList>
            <person name="Cazzulo J.J."/>
            <person name="Cazzulo-Franke M.C."/>
            <person name="Martinez J."/>
            <person name="Franke de Cazzulo B.M."/>
        </authorList>
    </citation>
    <scope>SPECIFICITY</scope>
    <source>
        <strain>Tulahuen 2</strain>
    </source>
</reference>
<reference key="7">
    <citation type="journal article" date="1989" name="Mol. Biochem. Parasitol.">
        <title>Further characterization and partial amino acid sequence of a cysteine proteinase from Trypanosoma cruzi.</title>
        <authorList>
            <person name="Cazzulo J.J."/>
            <person name="Couso R."/>
            <person name="Raimondi A."/>
            <person name="Wernstedt C."/>
            <person name="Hellman U."/>
        </authorList>
    </citation>
    <scope>PROTEIN SEQUENCE OF 123-146 AND 304-317</scope>
</reference>
<reference key="8">
    <citation type="journal article" date="1997" name="Protein Sci.">
        <title>Structural determinants of specificity in the cysteine protease cruzain.</title>
        <authorList>
            <person name="Gillmor S.A."/>
            <person name="Craik C.S."/>
            <person name="Fletterick R.J."/>
        </authorList>
    </citation>
    <scope>X-RAY CRYSTALLOGRAPHY (2.0 ANGSTROMS) OF 123-337</scope>
</reference>
<sequence length="467" mass="49836">MSGWARALLLAAVLVVMACLVPAATASLHAEETLTSQFAEFKQKHGRVYESAAEEAFRLSVFRENLFLARLHAAANPHATFGVTPFSDLTREEFRSRYHNGAAHFAAAQERARVPVKVEVVGAPAAVDWRARGAVTAVKDQGQCGSCWAFSAIGNVECQWFLAGHPLTNLSEQMLVSCDKTDSGCSGGLMNNAFEWIVQENNGAVYTEDSYPYASGEGISPPCTTSGHTVGATITGHVELPQDEAQIAAWLAVNGPVAVAVDASSWMTYTGGVMTSCVSEQLDHGVLLVGYNDSAAVPYWIIKNSWTTQWGEEGYIRIAKGSNQCLVKEEASSAVVGGPGPTPEPTTTTTTSAPGPSPSYFVQMSCTDAACIVGCENVTLPTGQCLLTTSGVSAIVTCGAETLTEEVFLTSTHCSGPSVRSSVPLNKCNRLLRGSVEFFCGSSSSGRLADVDRQRRHQPYHSRHRRL</sequence>
<organism>
    <name type="scientific">Trypanosoma cruzi</name>
    <dbReference type="NCBI Taxonomy" id="5693"/>
    <lineage>
        <taxon>Eukaryota</taxon>
        <taxon>Discoba</taxon>
        <taxon>Euglenozoa</taxon>
        <taxon>Kinetoplastea</taxon>
        <taxon>Metakinetoplastina</taxon>
        <taxon>Trypanosomatida</taxon>
        <taxon>Trypanosomatidae</taxon>
        <taxon>Trypanosoma</taxon>
        <taxon>Schizotrypanum</taxon>
    </lineage>
</organism>
<accession>P25779</accession>
<evidence type="ECO:0000255" key="1"/>
<evidence type="ECO:0000255" key="2">
    <source>
        <dbReference type="PROSITE-ProRule" id="PRU10088"/>
    </source>
</evidence>
<evidence type="ECO:0000255" key="3">
    <source>
        <dbReference type="PROSITE-ProRule" id="PRU10089"/>
    </source>
</evidence>
<evidence type="ECO:0000255" key="4">
    <source>
        <dbReference type="PROSITE-ProRule" id="PRU10090"/>
    </source>
</evidence>
<evidence type="ECO:0000256" key="5">
    <source>
        <dbReference type="SAM" id="MobiDB-lite"/>
    </source>
</evidence>
<evidence type="ECO:0000269" key="6">
    <source>
    </source>
</evidence>
<evidence type="ECO:0000305" key="7"/>
<evidence type="ECO:0000305" key="8">
    <source>
    </source>
</evidence>
<evidence type="ECO:0007829" key="9">
    <source>
        <dbReference type="PDB" id="1F2A"/>
    </source>
</evidence>
<evidence type="ECO:0007829" key="10">
    <source>
        <dbReference type="PDB" id="3I06"/>
    </source>
</evidence>
<evidence type="ECO:0007829" key="11">
    <source>
        <dbReference type="PDB" id="4QH6"/>
    </source>
</evidence>
<evidence type="ECO:0007829" key="12">
    <source>
        <dbReference type="PDB" id="6UX6"/>
    </source>
</evidence>
<evidence type="ECO:0007829" key="13">
    <source>
        <dbReference type="PDB" id="7S18"/>
    </source>
</evidence>
<comment type="function">
    <text>Hydrolyzes chromogenic peptides at the carboxyl Arg or Lys; requires at least one more amino acid, preferably Arg, Phe, Val or Leu, between the terminal Arg or Lys and the amino-blocking group.</text>
</comment>
<comment type="function">
    <text>The cysteine protease may play an important role in the development and differentiation of the parasites at several stages of their life cycle.</text>
</comment>
<comment type="catalytic activity">
    <reaction>
        <text>Broad endopeptidase specificity similar to that of cathepsin L.</text>
        <dbReference type="EC" id="3.4.22.51"/>
    </reaction>
</comment>
<comment type="activity regulation">
    <text>Strongly inhibited by E-64 (L-trans-epoxysuccinylleucylamido(4-guanidino)butane), Leupeptin, and N-alpha-p-tosyl-L-lysine chloromethyl ketone.</text>
</comment>
<comment type="developmental stage">
    <text>Present in all developmental stages.</text>
</comment>
<comment type="miscellaneous">
    <text>Purified cruzipain is able to degrade itself, yielding a complex mixture of small peptides, and a major 25 kDa fragment.</text>
</comment>
<comment type="similarity">
    <text evidence="2 3 4">Belongs to the peptidase C1 family.</text>
</comment>
<feature type="signal peptide" evidence="7">
    <location>
        <begin position="1"/>
        <end position="18"/>
    </location>
</feature>
<feature type="propeptide" id="PRO_0000026372" description="Activation peptide" evidence="8">
    <location>
        <begin position="19"/>
        <end position="122"/>
    </location>
</feature>
<feature type="chain" id="PRO_0000026373" description="Cruzipain">
    <location>
        <begin position="123"/>
        <end position="467"/>
    </location>
</feature>
<feature type="region of interest" description="Disordered" evidence="5">
    <location>
        <begin position="333"/>
        <end position="355"/>
    </location>
</feature>
<feature type="compositionally biased region" description="Low complexity" evidence="5">
    <location>
        <begin position="345"/>
        <end position="354"/>
    </location>
</feature>
<feature type="active site">
    <location>
        <position position="147"/>
    </location>
</feature>
<feature type="active site">
    <location>
        <position position="284"/>
    </location>
</feature>
<feature type="active site">
    <location>
        <position position="304"/>
    </location>
</feature>
<feature type="site" description="Cleavage; by autolysis" evidence="6">
    <location>
        <begin position="337"/>
        <end position="338"/>
    </location>
</feature>
<feature type="glycosylation site" description="N-linked (GlcNAc...) asparagine" evidence="1">
    <location>
        <position position="169"/>
    </location>
</feature>
<feature type="glycosylation site" description="N-linked (GlcNAc...) asparagine" evidence="1">
    <location>
        <position position="292"/>
    </location>
</feature>
<feature type="glycosylation site" description="N-linked (GlcNAc...) asparagine" evidence="1">
    <location>
        <position position="377"/>
    </location>
</feature>
<feature type="disulfide bond">
    <location>
        <begin position="144"/>
        <end position="185"/>
    </location>
</feature>
<feature type="disulfide bond">
    <location>
        <begin position="178"/>
        <end position="223"/>
    </location>
</feature>
<feature type="disulfide bond">
    <location>
        <begin position="277"/>
        <end position="325"/>
    </location>
</feature>
<feature type="sequence variant" description="In clone 1800-2.">
    <original>L</original>
    <variation>S</variation>
    <location>
        <position position="9"/>
    </location>
</feature>
<feature type="sequence variant" description="In clone 1800-2.">
    <original>T</original>
    <variation>A</variation>
    <location>
        <position position="35"/>
    </location>
</feature>
<feature type="sequence variant" description="In clone 1800-2.">
    <original>A</original>
    <variation>V</variation>
    <location>
        <position position="39"/>
    </location>
</feature>
<feature type="sequence variant" description="In clone 1800-4.">
    <original>S</original>
    <variation>N</variation>
    <location>
        <position position="51"/>
    </location>
</feature>
<feature type="sequence variant" description="In clone 1800-2.">
    <original>A</original>
    <variation>R</variation>
    <location>
        <position position="56"/>
    </location>
</feature>
<feature type="sequence variant" description="In clone 1800-4.">
    <original>N</original>
    <variation>G</variation>
    <location>
        <position position="76"/>
    </location>
</feature>
<feature type="sequence variant" description="In clone 1800-4.">
    <original>Q</original>
    <variation>G</variation>
    <location>
        <position position="109"/>
    </location>
</feature>
<feature type="sequence variant" description="In clone 1800-2.">
    <original>K</original>
    <variation>N</variation>
    <location>
        <position position="117"/>
    </location>
</feature>
<feature type="sequence variant">
    <original>S</original>
    <variation>G</variation>
    <location>
        <position position="146"/>
    </location>
</feature>
<feature type="sequence variant" description="In strain: RA.">
    <original>EC</original>
    <variation>SG</variation>
    <location>
        <begin position="157"/>
        <end position="158"/>
    </location>
</feature>
<feature type="sequence variant" description="In clones 1800-2 and 1800-4.">
    <original>S</original>
    <variation>G</variation>
    <location>
        <position position="186"/>
    </location>
</feature>
<feature type="sequence variant" description="In strain: RA.">
    <original>A</original>
    <variation>G</variation>
    <location>
        <position position="204"/>
    </location>
</feature>
<feature type="sequence variant" description="In clones 1800-2 and 1800-4.">
    <original>WL</original>
    <variation>CV</variation>
    <location>
        <begin position="250"/>
        <end position="251"/>
    </location>
</feature>
<feature type="sequence variant" description="In strain: RA.">
    <original>VD</original>
    <variation>H</variation>
    <location>
        <begin position="261"/>
        <end position="262"/>
    </location>
</feature>
<feature type="sequence variant" description="In clone 1800-4.">
    <original>V</original>
    <variation>F</variation>
    <location>
        <position position="286"/>
    </location>
</feature>
<feature type="sequence variant" description="In strain: RA.">
    <original>V</original>
    <variation>L</variation>
    <location>
        <position position="286"/>
    </location>
</feature>
<feature type="sequence variant" description="In clone 1800-2.">
    <original>T</original>
    <variation>A</variation>
    <location>
        <position position="308"/>
    </location>
</feature>
<feature type="sequence variant">
    <original>E</original>
    <variation>D</variation>
    <location>
        <position position="313"/>
    </location>
</feature>
<feature type="sequence variant" description="In clone 1800-2.">
    <original>L</original>
    <variation>F</variation>
    <location>
        <position position="409"/>
    </location>
</feature>
<feature type="sequence variant" description="In clone 1800-2.">
    <original>K</original>
    <variation>Q</variation>
    <location>
        <position position="427"/>
    </location>
</feature>
<feature type="sequence variant" description="In clone 1800-2.">
    <original>R</original>
    <variation>W</variation>
    <location>
        <position position="430"/>
    </location>
</feature>
<feature type="sequence variant" description="In clone 1800-2.">
    <original>H</original>
    <variation>Y</variation>
    <location>
        <position position="457"/>
    </location>
</feature>
<feature type="sequence variant" description="In clone 1800-2.">
    <original>H</original>
    <variation>Q</variation>
    <location>
        <position position="461"/>
    </location>
</feature>
<feature type="sequence conflict" description="In Ref. 4." evidence="7" ref="4">
    <original>S</original>
    <variation>C</variation>
    <location>
        <position position="357"/>
    </location>
</feature>
<feature type="strand" evidence="10">
    <location>
        <begin position="125"/>
        <end position="128"/>
    </location>
</feature>
<feature type="helix" evidence="10">
    <location>
        <begin position="129"/>
        <end position="132"/>
    </location>
</feature>
<feature type="strand" evidence="12">
    <location>
        <begin position="143"/>
        <end position="145"/>
    </location>
</feature>
<feature type="helix" evidence="10">
    <location>
        <begin position="147"/>
        <end position="162"/>
    </location>
</feature>
<feature type="helix" evidence="10">
    <location>
        <begin position="172"/>
        <end position="178"/>
    </location>
</feature>
<feature type="strand" evidence="10">
    <location>
        <begin position="180"/>
        <end position="182"/>
    </location>
</feature>
<feature type="helix" evidence="10">
    <location>
        <begin position="184"/>
        <end position="186"/>
    </location>
</feature>
<feature type="helix" evidence="10">
    <location>
        <begin position="190"/>
        <end position="200"/>
    </location>
</feature>
<feature type="strand" evidence="10">
    <location>
        <begin position="204"/>
        <end position="207"/>
    </location>
</feature>
<feature type="turn" evidence="10">
    <location>
        <begin position="208"/>
        <end position="210"/>
    </location>
</feature>
<feature type="strand" evidence="13">
    <location>
        <begin position="216"/>
        <end position="218"/>
    </location>
</feature>
<feature type="strand" evidence="9">
    <location>
        <begin position="225"/>
        <end position="227"/>
    </location>
</feature>
<feature type="strand" evidence="10">
    <location>
        <begin position="230"/>
        <end position="239"/>
    </location>
</feature>
<feature type="helix" evidence="10">
    <location>
        <begin position="244"/>
        <end position="254"/>
    </location>
</feature>
<feature type="strand" evidence="10">
    <location>
        <begin position="257"/>
        <end position="261"/>
    </location>
</feature>
<feature type="helix" evidence="11">
    <location>
        <begin position="263"/>
        <end position="265"/>
    </location>
</feature>
<feature type="helix" evidence="10">
    <location>
        <begin position="266"/>
        <end position="268"/>
    </location>
</feature>
<feature type="strand" evidence="10">
    <location>
        <begin position="271"/>
        <end position="274"/>
    </location>
</feature>
<feature type="strand" evidence="10">
    <location>
        <begin position="284"/>
        <end position="297"/>
    </location>
</feature>
<feature type="strand" evidence="10">
    <location>
        <begin position="299"/>
        <end position="303"/>
    </location>
</feature>
<feature type="turn" evidence="13">
    <location>
        <begin position="307"/>
        <end position="309"/>
    </location>
</feature>
<feature type="strand" evidence="10">
    <location>
        <begin position="315"/>
        <end position="322"/>
    </location>
</feature>
<feature type="helix" evidence="10">
    <location>
        <begin position="324"/>
        <end position="326"/>
    </location>
</feature>
<feature type="strand" evidence="10">
    <location>
        <begin position="329"/>
        <end position="336"/>
    </location>
</feature>
<dbReference type="EC" id="3.4.22.51"/>
<dbReference type="EMBL" id="M84342">
    <property type="protein sequence ID" value="AAA30181.1"/>
    <property type="molecule type" value="Genomic_DNA"/>
</dbReference>
<dbReference type="EMBL" id="M69121">
    <property type="protein sequence ID" value="AAA30269.1"/>
    <property type="molecule type" value="Genomic_DNA"/>
</dbReference>
<dbReference type="EMBL" id="M69121">
    <property type="protein sequence ID" value="AAA30270.1"/>
    <property type="molecule type" value="Genomic_DNA"/>
</dbReference>
<dbReference type="EMBL" id="X54414">
    <property type="protein sequence ID" value="CAA38278.1"/>
    <property type="molecule type" value="mRNA"/>
</dbReference>
<dbReference type="EMBL" id="M27305">
    <property type="protein sequence ID" value="AAA30180.1"/>
    <property type="molecule type" value="Genomic_DNA"/>
</dbReference>
<dbReference type="PIR" id="A60667">
    <property type="entry name" value="A60667"/>
</dbReference>
<dbReference type="PIR" id="S16162">
    <property type="entry name" value="S16162"/>
</dbReference>
<dbReference type="PDB" id="1AIM">
    <property type="method" value="X-ray"/>
    <property type="resolution" value="2.00 A"/>
    <property type="chains" value="A=123-337"/>
</dbReference>
<dbReference type="PDB" id="1EWL">
    <property type="method" value="X-ray"/>
    <property type="resolution" value="2.00 A"/>
    <property type="chains" value="A=123-337"/>
</dbReference>
<dbReference type="PDB" id="1EWM">
    <property type="method" value="X-ray"/>
    <property type="resolution" value="2.00 A"/>
    <property type="chains" value="A=123-337"/>
</dbReference>
<dbReference type="PDB" id="1EWO">
    <property type="method" value="X-ray"/>
    <property type="resolution" value="2.10 A"/>
    <property type="chains" value="A=123-337"/>
</dbReference>
<dbReference type="PDB" id="1EWP">
    <property type="method" value="X-ray"/>
    <property type="resolution" value="1.75 A"/>
    <property type="chains" value="A=123-337"/>
</dbReference>
<dbReference type="PDB" id="1F29">
    <property type="method" value="X-ray"/>
    <property type="resolution" value="2.15 A"/>
    <property type="chains" value="A/B/C=123-337"/>
</dbReference>
<dbReference type="PDB" id="1F2A">
    <property type="method" value="X-ray"/>
    <property type="resolution" value="1.60 A"/>
    <property type="chains" value="A=123-337"/>
</dbReference>
<dbReference type="PDB" id="1F2B">
    <property type="method" value="X-ray"/>
    <property type="resolution" value="1.80 A"/>
    <property type="chains" value="A=123-337"/>
</dbReference>
<dbReference type="PDB" id="1F2C">
    <property type="method" value="X-ray"/>
    <property type="resolution" value="2.00 A"/>
    <property type="chains" value="A=123-337"/>
</dbReference>
<dbReference type="PDB" id="1ME3">
    <property type="method" value="X-ray"/>
    <property type="resolution" value="1.20 A"/>
    <property type="chains" value="A=123-337"/>
</dbReference>
<dbReference type="PDB" id="1ME4">
    <property type="method" value="X-ray"/>
    <property type="resolution" value="1.20 A"/>
    <property type="chains" value="A=123-337"/>
</dbReference>
<dbReference type="PDB" id="1U9Q">
    <property type="method" value="X-ray"/>
    <property type="resolution" value="2.30 A"/>
    <property type="chains" value="X=123-337"/>
</dbReference>
<dbReference type="PDB" id="2AIM">
    <property type="method" value="X-ray"/>
    <property type="resolution" value="2.20 A"/>
    <property type="chains" value="A=123-337"/>
</dbReference>
<dbReference type="PDB" id="2OZ2">
    <property type="method" value="X-ray"/>
    <property type="resolution" value="1.95 A"/>
    <property type="chains" value="A/C=123-337"/>
</dbReference>
<dbReference type="PDB" id="3HD3">
    <property type="method" value="X-ray"/>
    <property type="resolution" value="1.75 A"/>
    <property type="chains" value="A/B=123-337"/>
</dbReference>
<dbReference type="PDB" id="3I06">
    <property type="method" value="X-ray"/>
    <property type="resolution" value="1.10 A"/>
    <property type="chains" value="A=123-337"/>
</dbReference>
<dbReference type="PDB" id="3IUT">
    <property type="method" value="X-ray"/>
    <property type="resolution" value="1.20 A"/>
    <property type="chains" value="A=123-337"/>
</dbReference>
<dbReference type="PDB" id="3KKU">
    <property type="method" value="X-ray"/>
    <property type="resolution" value="1.28 A"/>
    <property type="chains" value="A=123-337"/>
</dbReference>
<dbReference type="PDB" id="3LXS">
    <property type="method" value="X-ray"/>
    <property type="resolution" value="1.50 A"/>
    <property type="chains" value="A/C=123-337"/>
</dbReference>
<dbReference type="PDB" id="4KLB">
    <property type="method" value="X-ray"/>
    <property type="resolution" value="2.62 A"/>
    <property type="chains" value="A/B/C/D/E=123-337"/>
</dbReference>
<dbReference type="PDB" id="4PI3">
    <property type="method" value="X-ray"/>
    <property type="resolution" value="1.27 A"/>
    <property type="chains" value="A/B=122-337"/>
</dbReference>
<dbReference type="PDB" id="4QH6">
    <property type="method" value="X-ray"/>
    <property type="resolution" value="3.13 A"/>
    <property type="chains" value="A/B/C/D/E=123-337"/>
</dbReference>
<dbReference type="PDB" id="4W5B">
    <property type="method" value="X-ray"/>
    <property type="resolution" value="2.70 A"/>
    <property type="chains" value="A/B/C=123-337"/>
</dbReference>
<dbReference type="PDB" id="4W5C">
    <property type="method" value="X-ray"/>
    <property type="resolution" value="3.27 A"/>
    <property type="chains" value="A/B/C/D/E=122-337"/>
</dbReference>
<dbReference type="PDB" id="4XUI">
    <property type="method" value="X-ray"/>
    <property type="resolution" value="2.51 A"/>
    <property type="chains" value="A/B/C=122-337"/>
</dbReference>
<dbReference type="PDB" id="6N3S">
    <property type="method" value="X-ray"/>
    <property type="resolution" value="1.19 A"/>
    <property type="chains" value="A/B=123-337"/>
</dbReference>
<dbReference type="PDB" id="6O2X">
    <property type="method" value="X-ray"/>
    <property type="resolution" value="1.19 A"/>
    <property type="chains" value="A/B=123-337"/>
</dbReference>
<dbReference type="PDB" id="6UX6">
    <property type="method" value="X-ray"/>
    <property type="resolution" value="1.94 A"/>
    <property type="chains" value="A=123-337"/>
</dbReference>
<dbReference type="PDB" id="7JUJ">
    <property type="method" value="X-ray"/>
    <property type="resolution" value="2.20 A"/>
    <property type="chains" value="A/B/C/D/E/F=123-337"/>
</dbReference>
<dbReference type="PDB" id="7S18">
    <property type="method" value="X-ray"/>
    <property type="resolution" value="2.14 A"/>
    <property type="chains" value="A=123-337"/>
</dbReference>
<dbReference type="PDB" id="7S19">
    <property type="method" value="X-ray"/>
    <property type="resolution" value="2.08 A"/>
    <property type="chains" value="A=123-337"/>
</dbReference>
<dbReference type="PDBsum" id="1AIM"/>
<dbReference type="PDBsum" id="1EWL"/>
<dbReference type="PDBsum" id="1EWM"/>
<dbReference type="PDBsum" id="1EWO"/>
<dbReference type="PDBsum" id="1EWP"/>
<dbReference type="PDBsum" id="1F29"/>
<dbReference type="PDBsum" id="1F2A"/>
<dbReference type="PDBsum" id="1F2B"/>
<dbReference type="PDBsum" id="1F2C"/>
<dbReference type="PDBsum" id="1ME3"/>
<dbReference type="PDBsum" id="1ME4"/>
<dbReference type="PDBsum" id="1U9Q"/>
<dbReference type="PDBsum" id="2AIM"/>
<dbReference type="PDBsum" id="2OZ2"/>
<dbReference type="PDBsum" id="3HD3"/>
<dbReference type="PDBsum" id="3I06"/>
<dbReference type="PDBsum" id="3IUT"/>
<dbReference type="PDBsum" id="3KKU"/>
<dbReference type="PDBsum" id="3LXS"/>
<dbReference type="PDBsum" id="4KLB"/>
<dbReference type="PDBsum" id="4PI3"/>
<dbReference type="PDBsum" id="4QH6"/>
<dbReference type="PDBsum" id="4W5B"/>
<dbReference type="PDBsum" id="4W5C"/>
<dbReference type="PDBsum" id="4XUI"/>
<dbReference type="PDBsum" id="6N3S"/>
<dbReference type="PDBsum" id="6O2X"/>
<dbReference type="PDBsum" id="6UX6"/>
<dbReference type="PDBsum" id="7JUJ"/>
<dbReference type="PDBsum" id="7S18"/>
<dbReference type="PDBsum" id="7S19"/>
<dbReference type="BMRB" id="P25779"/>
<dbReference type="SMR" id="P25779"/>
<dbReference type="BindingDB" id="P25779"/>
<dbReference type="ChEMBL" id="CHEMBL3563"/>
<dbReference type="DrugBank" id="DB02200">
    <property type="generic name" value="3-[N-[benzyloxycarbonyl]-phenylalaninyl-amino]-5-phenyl-pentane-1-sulfonylmethylbenzene"/>
</dbReference>
<dbReference type="DrugBank" id="DB02051">
    <property type="generic name" value="4-Nitrophenyl (3S)-3-({N-[(benzyloxy)carbonyl]-L-phenylalanyl}amino)-5-phenyl-1-pentanesulfonate"/>
</dbReference>
<dbReference type="DrugBank" id="DB01871">
    <property type="generic name" value="[1-(1-Benzyl-3-Hydroxy-2-Oxo-Propylcarbamoyl)-2-Phenyl-Ethyl]-Carbamic Acid Benzyl Ester"/>
</dbReference>
<dbReference type="DrugBank" id="DB01810">
    <property type="generic name" value="[1-(1-Methyl-4,5-Dioxo-Pent-2-Enylcarbamoyl)-2-Phenyl-Ethyl]-Carbamic Acid Benzyl Ester"/>
</dbReference>
<dbReference type="DrugBank" id="DB02128">
    <property type="generic name" value="[1-(3-hydroxy-2-oxo-1-phenethyl-propylcarbamoyl)2-phenyl-ethyl]-carbamic acid pyridin-4-ylmethyl ester"/>
</dbReference>
<dbReference type="DrugBank" id="DB03536">
    <property type="generic name" value="Benzyl N-[(2S)-5-(diaminomethylamino)-1-[[(2S)-4-fluoro-3-oxobutan-2-yl]amino]-1-oxopentan-2-yl]carbamate"/>
</dbReference>
<dbReference type="DrugBank" id="DB17760">
    <property type="generic name" value="K-777"/>
</dbReference>
<dbReference type="DrugBank" id="DB09238">
    <property type="generic name" value="Manidipine"/>
</dbReference>
<dbReference type="DrugBank" id="DB12148">
    <property type="generic name" value="Menatetrenone"/>
</dbReference>
<dbReference type="DrugBank" id="DB04427">
    <property type="generic name" value="N-{(3S)-1-[(Benzyloxy)sulfamoyl]-5-phenyl-3-pentanyl}-NAlpha-[(4-methyl-1-piperazinyl)carbonyl]-L-phenylalaninamide"/>
</dbReference>
<dbReference type="DrugBank" id="DB12245">
    <property type="generic name" value="Triclabendazole"/>
</dbReference>
<dbReference type="DrugBank" id="DB03691">
    <property type="generic name" value="WRR-112"/>
</dbReference>
<dbReference type="DrugBank" id="DB04502">
    <property type="generic name" value="WRR-204"/>
</dbReference>
<dbReference type="DrugBank" id="DB03573">
    <property type="generic name" value="WRR-99"/>
</dbReference>
<dbReference type="DrugCentral" id="P25779"/>
<dbReference type="MEROPS" id="C01.075"/>
<dbReference type="VEuPathDB" id="TriTrypDB:BCY84_22409"/>
<dbReference type="VEuPathDB" id="TriTrypDB:C3747_50g3"/>
<dbReference type="VEuPathDB" id="TriTrypDB:C3747_50g6"/>
<dbReference type="VEuPathDB" id="TriTrypDB:C3747_50g7"/>
<dbReference type="VEuPathDB" id="TriTrypDB:C4B63_89g68"/>
<dbReference type="VEuPathDB" id="TriTrypDB:ECC02_002401"/>
<dbReference type="VEuPathDB" id="TriTrypDB:Tc_MARK_8050"/>
<dbReference type="VEuPathDB" id="TriTrypDB:Tc_MARK_8695"/>
<dbReference type="VEuPathDB" id="TriTrypDB:TcBrA4_0068180"/>
<dbReference type="VEuPathDB" id="TriTrypDB:TcCL_NonESM02572"/>
<dbReference type="VEuPathDB" id="TriTrypDB:TcCLB.507603.260"/>
<dbReference type="VEuPathDB" id="TriTrypDB:TcCLB.509429.320"/>
<dbReference type="VEuPathDB" id="TriTrypDB:TCDM_05847"/>
<dbReference type="VEuPathDB" id="TriTrypDB:TcG_06121"/>
<dbReference type="VEuPathDB" id="TriTrypDB:TCSYLVIO_008967"/>
<dbReference type="VEuPathDB" id="TriTrypDB:TcYC6_0061420"/>
<dbReference type="VEuPathDB" id="TriTrypDB:TcYC6_0061430"/>
<dbReference type="VEuPathDB" id="TriTrypDB:TcYC6_0061460"/>
<dbReference type="VEuPathDB" id="TriTrypDB:TcYC6_0061470"/>
<dbReference type="BRENDA" id="3.4.22.51">
    <property type="organism ID" value="6524"/>
</dbReference>
<dbReference type="SABIO-RK" id="P25779"/>
<dbReference type="EvolutionaryTrace" id="P25779"/>
<dbReference type="GO" id="GO:0004197">
    <property type="term" value="F:cysteine-type endopeptidase activity"/>
    <property type="evidence" value="ECO:0007669"/>
    <property type="project" value="InterPro"/>
</dbReference>
<dbReference type="GO" id="GO:0006508">
    <property type="term" value="P:proteolysis"/>
    <property type="evidence" value="ECO:0007669"/>
    <property type="project" value="UniProtKB-KW"/>
</dbReference>
<dbReference type="CDD" id="cd02248">
    <property type="entry name" value="Peptidase_C1A"/>
    <property type="match status" value="1"/>
</dbReference>
<dbReference type="FunFam" id="3.90.70.10:FF:000138">
    <property type="entry name" value="Cruzipain"/>
    <property type="match status" value="1"/>
</dbReference>
<dbReference type="Gene3D" id="1.10.287.2250">
    <property type="match status" value="1"/>
</dbReference>
<dbReference type="Gene3D" id="3.90.70.10">
    <property type="entry name" value="Cysteine proteinases"/>
    <property type="match status" value="1"/>
</dbReference>
<dbReference type="InterPro" id="IPR021981">
    <property type="entry name" value="DUF3586"/>
</dbReference>
<dbReference type="InterPro" id="IPR038765">
    <property type="entry name" value="Papain-like_cys_pep_sf"/>
</dbReference>
<dbReference type="InterPro" id="IPR025661">
    <property type="entry name" value="Pept_asp_AS"/>
</dbReference>
<dbReference type="InterPro" id="IPR000169">
    <property type="entry name" value="Pept_cys_AS"/>
</dbReference>
<dbReference type="InterPro" id="IPR025660">
    <property type="entry name" value="Pept_his_AS"/>
</dbReference>
<dbReference type="InterPro" id="IPR013128">
    <property type="entry name" value="Peptidase_C1A"/>
</dbReference>
<dbReference type="InterPro" id="IPR000668">
    <property type="entry name" value="Peptidase_C1A_C"/>
</dbReference>
<dbReference type="InterPro" id="IPR039417">
    <property type="entry name" value="Peptidase_C1A_papain-like"/>
</dbReference>
<dbReference type="InterPro" id="IPR013201">
    <property type="entry name" value="Prot_inhib_I29"/>
</dbReference>
<dbReference type="PANTHER" id="PTHR12411">
    <property type="entry name" value="CYSTEINE PROTEASE FAMILY C1-RELATED"/>
    <property type="match status" value="1"/>
</dbReference>
<dbReference type="Pfam" id="PF12131">
    <property type="entry name" value="DUF3586"/>
    <property type="match status" value="1"/>
</dbReference>
<dbReference type="Pfam" id="PF08246">
    <property type="entry name" value="Inhibitor_I29"/>
    <property type="match status" value="1"/>
</dbReference>
<dbReference type="Pfam" id="PF00112">
    <property type="entry name" value="Peptidase_C1"/>
    <property type="match status" value="1"/>
</dbReference>
<dbReference type="PRINTS" id="PR00705">
    <property type="entry name" value="PAPAIN"/>
</dbReference>
<dbReference type="SMART" id="SM00848">
    <property type="entry name" value="Inhibitor_I29"/>
    <property type="match status" value="1"/>
</dbReference>
<dbReference type="SMART" id="SM00645">
    <property type="entry name" value="Pept_C1"/>
    <property type="match status" value="1"/>
</dbReference>
<dbReference type="SUPFAM" id="SSF54001">
    <property type="entry name" value="Cysteine proteinases"/>
    <property type="match status" value="1"/>
</dbReference>
<dbReference type="PROSITE" id="PS00640">
    <property type="entry name" value="THIOL_PROTEASE_ASN"/>
    <property type="match status" value="1"/>
</dbReference>
<dbReference type="PROSITE" id="PS00139">
    <property type="entry name" value="THIOL_PROTEASE_CYS"/>
    <property type="match status" value="1"/>
</dbReference>
<dbReference type="PROSITE" id="PS00639">
    <property type="entry name" value="THIOL_PROTEASE_HIS"/>
    <property type="match status" value="1"/>
</dbReference>